<keyword id="KW-0963">Cytoplasm</keyword>
<keyword id="KW-0342">GTP-binding</keyword>
<keyword id="KW-0378">Hydrolase</keyword>
<keyword id="KW-0460">Magnesium</keyword>
<keyword id="KW-0479">Metal-binding</keyword>
<keyword id="KW-0547">Nucleotide-binding</keyword>
<keyword id="KW-1185">Reference proteome</keyword>
<accession>Q6AFY1</accession>
<protein>
    <recommendedName>
        <fullName evidence="1">GTPase Obg</fullName>
        <ecNumber evidence="1">3.6.5.-</ecNumber>
    </recommendedName>
    <alternativeName>
        <fullName evidence="1">GTP-binding protein Obg</fullName>
    </alternativeName>
</protein>
<dbReference type="EC" id="3.6.5.-" evidence="1"/>
<dbReference type="EMBL" id="AE016822">
    <property type="protein sequence ID" value="AAT88714.1"/>
    <property type="molecule type" value="Genomic_DNA"/>
</dbReference>
<dbReference type="RefSeq" id="WP_011185712.1">
    <property type="nucleotide sequence ID" value="NC_006087.1"/>
</dbReference>
<dbReference type="SMR" id="Q6AFY1"/>
<dbReference type="STRING" id="281090.Lxx08060"/>
<dbReference type="KEGG" id="lxx:Lxx08060"/>
<dbReference type="eggNOG" id="COG0536">
    <property type="taxonomic scope" value="Bacteria"/>
</dbReference>
<dbReference type="HOGENOM" id="CLU_011747_1_1_11"/>
<dbReference type="Proteomes" id="UP000001306">
    <property type="component" value="Chromosome"/>
</dbReference>
<dbReference type="GO" id="GO:0005737">
    <property type="term" value="C:cytoplasm"/>
    <property type="evidence" value="ECO:0007669"/>
    <property type="project" value="UniProtKB-SubCell"/>
</dbReference>
<dbReference type="GO" id="GO:0005525">
    <property type="term" value="F:GTP binding"/>
    <property type="evidence" value="ECO:0007669"/>
    <property type="project" value="UniProtKB-UniRule"/>
</dbReference>
<dbReference type="GO" id="GO:0003924">
    <property type="term" value="F:GTPase activity"/>
    <property type="evidence" value="ECO:0007669"/>
    <property type="project" value="UniProtKB-UniRule"/>
</dbReference>
<dbReference type="GO" id="GO:0000287">
    <property type="term" value="F:magnesium ion binding"/>
    <property type="evidence" value="ECO:0007669"/>
    <property type="project" value="InterPro"/>
</dbReference>
<dbReference type="GO" id="GO:0042254">
    <property type="term" value="P:ribosome biogenesis"/>
    <property type="evidence" value="ECO:0007669"/>
    <property type="project" value="UniProtKB-UniRule"/>
</dbReference>
<dbReference type="CDD" id="cd01898">
    <property type="entry name" value="Obg"/>
    <property type="match status" value="1"/>
</dbReference>
<dbReference type="FunFam" id="2.70.210.12:FF:000001">
    <property type="entry name" value="GTPase Obg"/>
    <property type="match status" value="1"/>
</dbReference>
<dbReference type="Gene3D" id="3.30.300.350">
    <property type="entry name" value="GTP-binding protein OBG, C-terminal domain"/>
    <property type="match status" value="1"/>
</dbReference>
<dbReference type="Gene3D" id="2.70.210.12">
    <property type="entry name" value="GTP1/OBG domain"/>
    <property type="match status" value="1"/>
</dbReference>
<dbReference type="Gene3D" id="3.40.50.300">
    <property type="entry name" value="P-loop containing nucleotide triphosphate hydrolases"/>
    <property type="match status" value="1"/>
</dbReference>
<dbReference type="HAMAP" id="MF_01454">
    <property type="entry name" value="GTPase_Obg"/>
    <property type="match status" value="1"/>
</dbReference>
<dbReference type="InterPro" id="IPR031167">
    <property type="entry name" value="G_OBG"/>
</dbReference>
<dbReference type="InterPro" id="IPR006073">
    <property type="entry name" value="GTP-bd"/>
</dbReference>
<dbReference type="InterPro" id="IPR014100">
    <property type="entry name" value="GTP-bd_Obg/CgtA"/>
</dbReference>
<dbReference type="InterPro" id="IPR036346">
    <property type="entry name" value="GTP-bd_prot_GTP1/OBG_C_sf"/>
</dbReference>
<dbReference type="InterPro" id="IPR006074">
    <property type="entry name" value="GTP1-OBG_CS"/>
</dbReference>
<dbReference type="InterPro" id="IPR006169">
    <property type="entry name" value="GTP1_OBG_dom"/>
</dbReference>
<dbReference type="InterPro" id="IPR036726">
    <property type="entry name" value="GTP1_OBG_dom_sf"/>
</dbReference>
<dbReference type="InterPro" id="IPR045086">
    <property type="entry name" value="OBG_GTPase"/>
</dbReference>
<dbReference type="InterPro" id="IPR015349">
    <property type="entry name" value="OCT_dom"/>
</dbReference>
<dbReference type="InterPro" id="IPR027417">
    <property type="entry name" value="P-loop_NTPase"/>
</dbReference>
<dbReference type="NCBIfam" id="TIGR02729">
    <property type="entry name" value="Obg_CgtA"/>
    <property type="match status" value="1"/>
</dbReference>
<dbReference type="NCBIfam" id="TIGR03595">
    <property type="entry name" value="Obg_CgtA_exten"/>
    <property type="match status" value="1"/>
</dbReference>
<dbReference type="NCBIfam" id="NF008954">
    <property type="entry name" value="PRK12296.1"/>
    <property type="match status" value="1"/>
</dbReference>
<dbReference type="NCBIfam" id="NF008955">
    <property type="entry name" value="PRK12297.1"/>
    <property type="match status" value="1"/>
</dbReference>
<dbReference type="NCBIfam" id="NF008956">
    <property type="entry name" value="PRK12299.1"/>
    <property type="match status" value="1"/>
</dbReference>
<dbReference type="PANTHER" id="PTHR11702">
    <property type="entry name" value="DEVELOPMENTALLY REGULATED GTP-BINDING PROTEIN-RELATED"/>
    <property type="match status" value="1"/>
</dbReference>
<dbReference type="PANTHER" id="PTHR11702:SF31">
    <property type="entry name" value="MITOCHONDRIAL RIBOSOME-ASSOCIATED GTPASE 2"/>
    <property type="match status" value="1"/>
</dbReference>
<dbReference type="Pfam" id="PF09269">
    <property type="entry name" value="DUF1967"/>
    <property type="match status" value="1"/>
</dbReference>
<dbReference type="Pfam" id="PF01018">
    <property type="entry name" value="GTP1_OBG"/>
    <property type="match status" value="1"/>
</dbReference>
<dbReference type="Pfam" id="PF01926">
    <property type="entry name" value="MMR_HSR1"/>
    <property type="match status" value="1"/>
</dbReference>
<dbReference type="PRINTS" id="PR00326">
    <property type="entry name" value="GTP1OBG"/>
</dbReference>
<dbReference type="SUPFAM" id="SSF102741">
    <property type="entry name" value="Obg GTP-binding protein C-terminal domain"/>
    <property type="match status" value="1"/>
</dbReference>
<dbReference type="SUPFAM" id="SSF82051">
    <property type="entry name" value="Obg GTP-binding protein N-terminal domain"/>
    <property type="match status" value="1"/>
</dbReference>
<dbReference type="SUPFAM" id="SSF52540">
    <property type="entry name" value="P-loop containing nucleoside triphosphate hydrolases"/>
    <property type="match status" value="1"/>
</dbReference>
<dbReference type="PROSITE" id="PS51710">
    <property type="entry name" value="G_OBG"/>
    <property type="match status" value="1"/>
</dbReference>
<dbReference type="PROSITE" id="PS00905">
    <property type="entry name" value="GTP1_OBG"/>
    <property type="match status" value="1"/>
</dbReference>
<dbReference type="PROSITE" id="PS51883">
    <property type="entry name" value="OBG"/>
    <property type="match status" value="1"/>
</dbReference>
<dbReference type="PROSITE" id="PS51881">
    <property type="entry name" value="OCT"/>
    <property type="match status" value="1"/>
</dbReference>
<organism>
    <name type="scientific">Leifsonia xyli subsp. xyli (strain CTCB07)</name>
    <dbReference type="NCBI Taxonomy" id="281090"/>
    <lineage>
        <taxon>Bacteria</taxon>
        <taxon>Bacillati</taxon>
        <taxon>Actinomycetota</taxon>
        <taxon>Actinomycetes</taxon>
        <taxon>Micrococcales</taxon>
        <taxon>Microbacteriaceae</taxon>
        <taxon>Leifsonia</taxon>
    </lineage>
</organism>
<reference key="1">
    <citation type="journal article" date="2004" name="Mol. Plant Microbe Interact.">
        <title>The genome sequence of the Gram-positive sugarcane pathogen Leifsonia xyli subsp. xyli.</title>
        <authorList>
            <person name="Monteiro-Vitorello C.B."/>
            <person name="Camargo L.E.A."/>
            <person name="Van Sluys M.A."/>
            <person name="Kitajima J.P."/>
            <person name="Truffi D."/>
            <person name="do Amaral A.M."/>
            <person name="Harakava R."/>
            <person name="de Oliveira J.C.F."/>
            <person name="Wood D."/>
            <person name="de Oliveira M.C."/>
            <person name="Miyaki C.Y."/>
            <person name="Takita M.A."/>
            <person name="da Silva A.C.R."/>
            <person name="Furlan L.R."/>
            <person name="Carraro D.M."/>
            <person name="Camarotte G."/>
            <person name="Almeida N.F. Jr."/>
            <person name="Carrer H."/>
            <person name="Coutinho L.L."/>
            <person name="El-Dorry H.A."/>
            <person name="Ferro M.I.T."/>
            <person name="Gagliardi P.R."/>
            <person name="Giglioti E."/>
            <person name="Goldman M.H.S."/>
            <person name="Goldman G.H."/>
            <person name="Kimura E.T."/>
            <person name="Ferro E.S."/>
            <person name="Kuramae E.E."/>
            <person name="Lemos E.G.M."/>
            <person name="Lemos M.V.F."/>
            <person name="Mauro S.M.Z."/>
            <person name="Machado M.A."/>
            <person name="Marino C.L."/>
            <person name="Menck C.F."/>
            <person name="Nunes L.R."/>
            <person name="Oliveira R.C."/>
            <person name="Pereira G.G."/>
            <person name="Siqueira W."/>
            <person name="de Souza A.A."/>
            <person name="Tsai S.M."/>
            <person name="Zanca A.S."/>
            <person name="Simpson A.J.G."/>
            <person name="Brumbley S.M."/>
            <person name="Setubal J.C."/>
        </authorList>
    </citation>
    <scope>NUCLEOTIDE SEQUENCE [LARGE SCALE GENOMIC DNA]</scope>
    <source>
        <strain>CTCB07</strain>
    </source>
</reference>
<proteinExistence type="inferred from homology"/>
<gene>
    <name evidence="1" type="primary">obg</name>
    <name type="ordered locus">Lxx08060</name>
</gene>
<comment type="function">
    <text evidence="1">An essential GTPase which binds GTP, GDP and possibly (p)ppGpp with moderate affinity, with high nucleotide exchange rates and a fairly low GTP hydrolysis rate. Plays a role in control of the cell cycle, stress response, ribosome biogenesis and in those bacteria that undergo differentiation, in morphogenesis control.</text>
</comment>
<comment type="cofactor">
    <cofactor evidence="1">
        <name>Mg(2+)</name>
        <dbReference type="ChEBI" id="CHEBI:18420"/>
    </cofactor>
</comment>
<comment type="subunit">
    <text evidence="1">Monomer.</text>
</comment>
<comment type="subcellular location">
    <subcellularLocation>
        <location evidence="1">Cytoplasm</location>
    </subcellularLocation>
</comment>
<comment type="similarity">
    <text evidence="1">Belongs to the TRAFAC class OBG-HflX-like GTPase superfamily. OBG GTPase family.</text>
</comment>
<evidence type="ECO:0000255" key="1">
    <source>
        <dbReference type="HAMAP-Rule" id="MF_01454"/>
    </source>
</evidence>
<evidence type="ECO:0000255" key="2">
    <source>
        <dbReference type="PROSITE-ProRule" id="PRU01229"/>
    </source>
</evidence>
<evidence type="ECO:0000255" key="3">
    <source>
        <dbReference type="PROSITE-ProRule" id="PRU01231"/>
    </source>
</evidence>
<evidence type="ECO:0000256" key="4">
    <source>
        <dbReference type="SAM" id="MobiDB-lite"/>
    </source>
</evidence>
<sequence length="514" mass="54759">MATFVDRVTVHLRAGNGGNGCVSVRREKFKPLAGPDGGNGGNGGDIVLVADPQVTTLLGYHRRPHRSSGNGGFGMGDHRSGHTGEDLELPVPVGTVVKSSEGAELADLTEPGMRIVAAPGGIGGLGNAALSNPKRKAPGFALLGTPGWEGDILLELKTVADIALVGYPSAGKSSLIAALSAAKPKIADYPFTTLHPNLGVVQVGDVRYTVADVPGLIEGASEGRGLGFEFLRHVERCSALLHVLDCATLEPGRDPLSDLDVILAELAAYPVPEGQLPLLERPQLIALNKIDVPDARELADFLRPDLEARGYRVFEISTVSHEGLRPLSFALAELVERARKEQAVLDETRPRIIVRPKTVDDSGFVVKVEGGSEGPVYRVLGAKPERWVAQTDFQNDEAIGYLAARLAKLGVEDQLVRVGAVAGSTVVIGRENGVVFDWEPTLTSAAELISSPRGTDARIGVNARPTRAQRREDYFDRMDAKAEARAELLREREAGLWKDDDAAVQGGSEETGRE</sequence>
<name>OBG_LEIXX</name>
<feature type="chain" id="PRO_0000386012" description="GTPase Obg">
    <location>
        <begin position="1"/>
        <end position="514"/>
    </location>
</feature>
<feature type="domain" description="Obg" evidence="3">
    <location>
        <begin position="2"/>
        <end position="159"/>
    </location>
</feature>
<feature type="domain" description="OBG-type G" evidence="1">
    <location>
        <begin position="160"/>
        <end position="336"/>
    </location>
</feature>
<feature type="domain" description="OCT" evidence="2">
    <location>
        <begin position="356"/>
        <end position="440"/>
    </location>
</feature>
<feature type="region of interest" description="Disordered" evidence="4">
    <location>
        <begin position="62"/>
        <end position="88"/>
    </location>
</feature>
<feature type="compositionally biased region" description="Basic and acidic residues" evidence="4">
    <location>
        <begin position="76"/>
        <end position="85"/>
    </location>
</feature>
<feature type="binding site" evidence="1">
    <location>
        <begin position="166"/>
        <end position="173"/>
    </location>
    <ligand>
        <name>GTP</name>
        <dbReference type="ChEBI" id="CHEBI:37565"/>
    </ligand>
</feature>
<feature type="binding site" evidence="1">
    <location>
        <position position="173"/>
    </location>
    <ligand>
        <name>Mg(2+)</name>
        <dbReference type="ChEBI" id="CHEBI:18420"/>
    </ligand>
</feature>
<feature type="binding site" evidence="1">
    <location>
        <begin position="191"/>
        <end position="195"/>
    </location>
    <ligand>
        <name>GTP</name>
        <dbReference type="ChEBI" id="CHEBI:37565"/>
    </ligand>
</feature>
<feature type="binding site" evidence="1">
    <location>
        <position position="193"/>
    </location>
    <ligand>
        <name>Mg(2+)</name>
        <dbReference type="ChEBI" id="CHEBI:18420"/>
    </ligand>
</feature>
<feature type="binding site" evidence="1">
    <location>
        <begin position="212"/>
        <end position="215"/>
    </location>
    <ligand>
        <name>GTP</name>
        <dbReference type="ChEBI" id="CHEBI:37565"/>
    </ligand>
</feature>
<feature type="binding site" evidence="1">
    <location>
        <begin position="288"/>
        <end position="291"/>
    </location>
    <ligand>
        <name>GTP</name>
        <dbReference type="ChEBI" id="CHEBI:37565"/>
    </ligand>
</feature>
<feature type="binding site" evidence="1">
    <location>
        <begin position="317"/>
        <end position="319"/>
    </location>
    <ligand>
        <name>GTP</name>
        <dbReference type="ChEBI" id="CHEBI:37565"/>
    </ligand>
</feature>